<gene>
    <name evidence="1" type="primary">cutC</name>
    <name type="ordered locus">SeHA_C2121</name>
</gene>
<evidence type="ECO:0000255" key="1">
    <source>
        <dbReference type="HAMAP-Rule" id="MF_00795"/>
    </source>
</evidence>
<dbReference type="EMBL" id="CP001120">
    <property type="protein sequence ID" value="ACF70232.1"/>
    <property type="molecule type" value="Genomic_DNA"/>
</dbReference>
<dbReference type="RefSeq" id="WP_001185769.1">
    <property type="nucleotide sequence ID" value="NC_011083.1"/>
</dbReference>
<dbReference type="SMR" id="B4T805"/>
<dbReference type="KEGG" id="seh:SeHA_C2121"/>
<dbReference type="HOGENOM" id="CLU_050555_3_2_6"/>
<dbReference type="Proteomes" id="UP000001866">
    <property type="component" value="Chromosome"/>
</dbReference>
<dbReference type="GO" id="GO:0005737">
    <property type="term" value="C:cytoplasm"/>
    <property type="evidence" value="ECO:0007669"/>
    <property type="project" value="UniProtKB-SubCell"/>
</dbReference>
<dbReference type="GO" id="GO:0005507">
    <property type="term" value="F:copper ion binding"/>
    <property type="evidence" value="ECO:0007669"/>
    <property type="project" value="TreeGrafter"/>
</dbReference>
<dbReference type="FunFam" id="3.20.20.380:FF:000001">
    <property type="entry name" value="Copper homeostasis protein CutC"/>
    <property type="match status" value="1"/>
</dbReference>
<dbReference type="Gene3D" id="3.20.20.380">
    <property type="entry name" value="Copper homeostasis (CutC) domain"/>
    <property type="match status" value="1"/>
</dbReference>
<dbReference type="HAMAP" id="MF_00795">
    <property type="entry name" value="CutC"/>
    <property type="match status" value="1"/>
</dbReference>
<dbReference type="InterPro" id="IPR005627">
    <property type="entry name" value="CutC-like"/>
</dbReference>
<dbReference type="InterPro" id="IPR036822">
    <property type="entry name" value="CutC-like_dom_sf"/>
</dbReference>
<dbReference type="NCBIfam" id="NF008603">
    <property type="entry name" value="PRK11572.1"/>
    <property type="match status" value="1"/>
</dbReference>
<dbReference type="PANTHER" id="PTHR12598">
    <property type="entry name" value="COPPER HOMEOSTASIS PROTEIN CUTC"/>
    <property type="match status" value="1"/>
</dbReference>
<dbReference type="PANTHER" id="PTHR12598:SF0">
    <property type="entry name" value="COPPER HOMEOSTASIS PROTEIN CUTC HOMOLOG"/>
    <property type="match status" value="1"/>
</dbReference>
<dbReference type="Pfam" id="PF03932">
    <property type="entry name" value="CutC"/>
    <property type="match status" value="1"/>
</dbReference>
<dbReference type="SUPFAM" id="SSF110395">
    <property type="entry name" value="CutC-like"/>
    <property type="match status" value="1"/>
</dbReference>
<keyword id="KW-0963">Cytoplasm</keyword>
<comment type="subunit">
    <text evidence="1">Homodimer.</text>
</comment>
<comment type="subcellular location">
    <subcellularLocation>
        <location evidence="1">Cytoplasm</location>
    </subcellularLocation>
</comment>
<comment type="similarity">
    <text evidence="1">Belongs to the CutC family.</text>
</comment>
<comment type="caution">
    <text evidence="1">Once thought to be involved in copper homeostasis, experiments in E.coli have shown this is not the case.</text>
</comment>
<protein>
    <recommendedName>
        <fullName evidence="1">PF03932 family protein CutC</fullName>
    </recommendedName>
</protein>
<reference key="1">
    <citation type="journal article" date="2011" name="J. Bacteriol.">
        <title>Comparative genomics of 28 Salmonella enterica isolates: evidence for CRISPR-mediated adaptive sublineage evolution.</title>
        <authorList>
            <person name="Fricke W.F."/>
            <person name="Mammel M.K."/>
            <person name="McDermott P.F."/>
            <person name="Tartera C."/>
            <person name="White D.G."/>
            <person name="Leclerc J.E."/>
            <person name="Ravel J."/>
            <person name="Cebula T.A."/>
        </authorList>
    </citation>
    <scope>NUCLEOTIDE SEQUENCE [LARGE SCALE GENOMIC DNA]</scope>
    <source>
        <strain>SL476</strain>
    </source>
</reference>
<feature type="chain" id="PRO_1000133846" description="PF03932 family protein CutC">
    <location>
        <begin position="1"/>
        <end position="248"/>
    </location>
</feature>
<accession>B4T805</accession>
<name>CUTC_SALHS</name>
<proteinExistence type="inferred from homology"/>
<sequence length="248" mass="26639">MALLEICCYSMECALTAQRNGADRIELCAAPKEGGLTPSFGVLRSVREHITIPVHPIIRPRGGDFYYTDGEFAAMLEDIRLVRELGFPGLVTGVLTVDGDVDMSRMEKIMAAAGPLAVTFHRAFDMCANPFNALKNLADAGVARVLTSGQKADAAQGLSIIMELIAQGDAPIIMAGAGVRANNLQNFLDAGVREVHSSAGVLLPSPMRYRNQGLSMSADIQADEYSRYRVEGASVAEMKGIIVRHQAK</sequence>
<organism>
    <name type="scientific">Salmonella heidelberg (strain SL476)</name>
    <dbReference type="NCBI Taxonomy" id="454169"/>
    <lineage>
        <taxon>Bacteria</taxon>
        <taxon>Pseudomonadati</taxon>
        <taxon>Pseudomonadota</taxon>
        <taxon>Gammaproteobacteria</taxon>
        <taxon>Enterobacterales</taxon>
        <taxon>Enterobacteriaceae</taxon>
        <taxon>Salmonella</taxon>
    </lineage>
</organism>